<feature type="chain" id="PRO_0000338375" description="CBL-interacting protein kinase 17">
    <location>
        <begin position="1"/>
        <end position="454"/>
    </location>
</feature>
<feature type="domain" description="Protein kinase" evidence="2">
    <location>
        <begin position="13"/>
        <end position="268"/>
    </location>
</feature>
<feature type="domain" description="NAF" evidence="3">
    <location>
        <begin position="304"/>
        <end position="328"/>
    </location>
</feature>
<feature type="region of interest" description="Activation loop" evidence="1">
    <location>
        <begin position="154"/>
        <end position="183"/>
    </location>
</feature>
<feature type="region of interest" description="PPI" evidence="1">
    <location>
        <begin position="334"/>
        <end position="363"/>
    </location>
</feature>
<feature type="active site" description="Proton acceptor" evidence="2 4">
    <location>
        <position position="136"/>
    </location>
</feature>
<feature type="binding site" evidence="2">
    <location>
        <begin position="19"/>
        <end position="27"/>
    </location>
    <ligand>
        <name>ATP</name>
        <dbReference type="ChEBI" id="CHEBI:30616"/>
    </ligand>
</feature>
<feature type="binding site" evidence="2">
    <location>
        <position position="42"/>
    </location>
    <ligand>
        <name>ATP</name>
        <dbReference type="ChEBI" id="CHEBI:30616"/>
    </ligand>
</feature>
<feature type="sequence conflict" description="In Ref. 5; AK100498." evidence="6" ref="5">
    <original>I</original>
    <variation>V</variation>
    <location>
        <position position="43"/>
    </location>
</feature>
<reference key="1">
    <citation type="journal article" date="2005" name="Mol. Genet. Genomics">
        <title>A fine physical map of the rice chromosome 5.</title>
        <authorList>
            <person name="Cheng C.-H."/>
            <person name="Chung M.C."/>
            <person name="Liu S.-M."/>
            <person name="Chen S.-K."/>
            <person name="Kao F.Y."/>
            <person name="Lin S.-J."/>
            <person name="Hsiao S.-H."/>
            <person name="Tseng I.C."/>
            <person name="Hsing Y.-I.C."/>
            <person name="Wu H.-P."/>
            <person name="Chen C.-S."/>
            <person name="Shaw J.-F."/>
            <person name="Wu J."/>
            <person name="Matsumoto T."/>
            <person name="Sasaki T."/>
            <person name="Chen H.-C."/>
            <person name="Chow T.-Y."/>
        </authorList>
    </citation>
    <scope>NUCLEOTIDE SEQUENCE [LARGE SCALE GENOMIC DNA]</scope>
    <source>
        <strain>cv. Nipponbare</strain>
    </source>
</reference>
<reference key="2">
    <citation type="journal article" date="2005" name="Nature">
        <title>The map-based sequence of the rice genome.</title>
        <authorList>
            <consortium name="International rice genome sequencing project (IRGSP)"/>
        </authorList>
    </citation>
    <scope>NUCLEOTIDE SEQUENCE [LARGE SCALE GENOMIC DNA]</scope>
    <source>
        <strain>cv. Nipponbare</strain>
    </source>
</reference>
<reference key="3">
    <citation type="journal article" date="2008" name="Nucleic Acids Res.">
        <title>The rice annotation project database (RAP-DB): 2008 update.</title>
        <authorList>
            <consortium name="The rice annotation project (RAP)"/>
        </authorList>
    </citation>
    <scope>GENOME REANNOTATION</scope>
    <source>
        <strain>cv. Nipponbare</strain>
    </source>
</reference>
<reference key="4">
    <citation type="journal article" date="2013" name="Rice">
        <title>Improvement of the Oryza sativa Nipponbare reference genome using next generation sequence and optical map data.</title>
        <authorList>
            <person name="Kawahara Y."/>
            <person name="de la Bastide M."/>
            <person name="Hamilton J.P."/>
            <person name="Kanamori H."/>
            <person name="McCombie W.R."/>
            <person name="Ouyang S."/>
            <person name="Schwartz D.C."/>
            <person name="Tanaka T."/>
            <person name="Wu J."/>
            <person name="Zhou S."/>
            <person name="Childs K.L."/>
            <person name="Davidson R.M."/>
            <person name="Lin H."/>
            <person name="Quesada-Ocampo L."/>
            <person name="Vaillancourt B."/>
            <person name="Sakai H."/>
            <person name="Lee S.S."/>
            <person name="Kim J."/>
            <person name="Numa H."/>
            <person name="Itoh T."/>
            <person name="Buell C.R."/>
            <person name="Matsumoto T."/>
        </authorList>
    </citation>
    <scope>GENOME REANNOTATION</scope>
    <source>
        <strain>cv. Nipponbare</strain>
    </source>
</reference>
<reference key="5">
    <citation type="journal article" date="2003" name="Science">
        <title>Collection, mapping, and annotation of over 28,000 cDNA clones from japonica rice.</title>
        <authorList>
            <consortium name="The rice full-length cDNA consortium"/>
        </authorList>
    </citation>
    <scope>NUCLEOTIDE SEQUENCE [LARGE SCALE MRNA]</scope>
    <source>
        <strain>cv. Nipponbare</strain>
    </source>
</reference>
<reference key="6">
    <citation type="journal article" date="2004" name="Plant Physiol.">
        <title>Calcium sensors and their interacting protein kinases: genomics of the Arabidopsis and rice CBL-CIPK signaling networks.</title>
        <authorList>
            <person name="Kolukisaoglu U."/>
            <person name="Weinl S."/>
            <person name="Blazevic D."/>
            <person name="Batistic O."/>
            <person name="Kudla J."/>
        </authorList>
    </citation>
    <scope>GENE FAMILY</scope>
    <scope>NOMENCLATURE</scope>
</reference>
<reference key="7">
    <citation type="journal article" date="2007" name="Plant Physiol.">
        <title>Characterization of stress-responsive CIPK genes in rice for stress tolerance improvement.</title>
        <authorList>
            <person name="Xiang Y."/>
            <person name="Huang Y."/>
            <person name="Xiong L."/>
        </authorList>
    </citation>
    <scope>INDUCTION</scope>
</reference>
<proteinExistence type="evidence at transcript level"/>
<name>CIPKH_ORYSJ</name>
<organism>
    <name type="scientific">Oryza sativa subsp. japonica</name>
    <name type="common">Rice</name>
    <dbReference type="NCBI Taxonomy" id="39947"/>
    <lineage>
        <taxon>Eukaryota</taxon>
        <taxon>Viridiplantae</taxon>
        <taxon>Streptophyta</taxon>
        <taxon>Embryophyta</taxon>
        <taxon>Tracheophyta</taxon>
        <taxon>Spermatophyta</taxon>
        <taxon>Magnoliopsida</taxon>
        <taxon>Liliopsida</taxon>
        <taxon>Poales</taxon>
        <taxon>Poaceae</taxon>
        <taxon>BOP clade</taxon>
        <taxon>Oryzoideae</taxon>
        <taxon>Oryzeae</taxon>
        <taxon>Oryzinae</taxon>
        <taxon>Oryza</taxon>
        <taxon>Oryza sativa</taxon>
    </lineage>
</organism>
<dbReference type="EC" id="2.7.11.1"/>
<dbReference type="EMBL" id="AC087552">
    <property type="protein sequence ID" value="AAT94057.1"/>
    <property type="molecule type" value="Genomic_DNA"/>
</dbReference>
<dbReference type="EMBL" id="AC093490">
    <property type="protein sequence ID" value="AAS98416.1"/>
    <property type="molecule type" value="Genomic_DNA"/>
</dbReference>
<dbReference type="EMBL" id="AP008211">
    <property type="protein sequence ID" value="BAF16492.1"/>
    <property type="molecule type" value="Genomic_DNA"/>
</dbReference>
<dbReference type="EMBL" id="AP014961">
    <property type="protein sequence ID" value="BAS92155.1"/>
    <property type="molecule type" value="Genomic_DNA"/>
</dbReference>
<dbReference type="EMBL" id="AK100498">
    <property type="status" value="NOT_ANNOTATED_CDS"/>
    <property type="molecule type" value="mRNA"/>
</dbReference>
<dbReference type="RefSeq" id="XP_015637771.1">
    <property type="nucleotide sequence ID" value="XM_015782285.1"/>
</dbReference>
<dbReference type="SMR" id="Q75L42"/>
<dbReference type="BioGRID" id="806773">
    <property type="interactions" value="2"/>
</dbReference>
<dbReference type="FunCoup" id="Q75L42">
    <property type="interactions" value="110"/>
</dbReference>
<dbReference type="STRING" id="39947.Q75L42"/>
<dbReference type="PaxDb" id="39947-Q75L42"/>
<dbReference type="EnsemblPlants" id="Os05t0136200-01">
    <property type="protein sequence ID" value="Os05t0136200-01"/>
    <property type="gene ID" value="Os05g0136200"/>
</dbReference>
<dbReference type="EnsemblPlants" id="Os05t0136200-02">
    <property type="protein sequence ID" value="Os05t0136200-02"/>
    <property type="gene ID" value="Os05g0136200"/>
</dbReference>
<dbReference type="Gramene" id="Os05t0136200-01">
    <property type="protein sequence ID" value="Os05t0136200-01"/>
    <property type="gene ID" value="Os05g0136200"/>
</dbReference>
<dbReference type="Gramene" id="Os05t0136200-02">
    <property type="protein sequence ID" value="Os05t0136200-02"/>
    <property type="gene ID" value="Os05g0136200"/>
</dbReference>
<dbReference type="KEGG" id="dosa:Os05g0136200"/>
<dbReference type="eggNOG" id="KOG0583">
    <property type="taxonomic scope" value="Eukaryota"/>
</dbReference>
<dbReference type="HOGENOM" id="CLU_000288_59_0_1"/>
<dbReference type="InParanoid" id="Q75L42"/>
<dbReference type="OMA" id="CNGSKNP"/>
<dbReference type="OrthoDB" id="193931at2759"/>
<dbReference type="Proteomes" id="UP000000763">
    <property type="component" value="Chromosome 5"/>
</dbReference>
<dbReference type="Proteomes" id="UP000059680">
    <property type="component" value="Chromosome 5"/>
</dbReference>
<dbReference type="ExpressionAtlas" id="Q75L42">
    <property type="expression patterns" value="baseline and differential"/>
</dbReference>
<dbReference type="GO" id="GO:0005524">
    <property type="term" value="F:ATP binding"/>
    <property type="evidence" value="ECO:0007669"/>
    <property type="project" value="UniProtKB-KW"/>
</dbReference>
<dbReference type="GO" id="GO:0106310">
    <property type="term" value="F:protein serine kinase activity"/>
    <property type="evidence" value="ECO:0007669"/>
    <property type="project" value="RHEA"/>
</dbReference>
<dbReference type="GO" id="GO:0004674">
    <property type="term" value="F:protein serine/threonine kinase activity"/>
    <property type="evidence" value="ECO:0000318"/>
    <property type="project" value="GO_Central"/>
</dbReference>
<dbReference type="GO" id="GO:0007165">
    <property type="term" value="P:signal transduction"/>
    <property type="evidence" value="ECO:0007669"/>
    <property type="project" value="InterPro"/>
</dbReference>
<dbReference type="CDD" id="cd12195">
    <property type="entry name" value="CIPK_C"/>
    <property type="match status" value="1"/>
</dbReference>
<dbReference type="FunFam" id="1.10.510.10:FF:000279">
    <property type="entry name" value="Non-specific serine/threonine protein kinase"/>
    <property type="match status" value="1"/>
</dbReference>
<dbReference type="FunFam" id="3.30.200.20:FF:000096">
    <property type="entry name" value="Non-specific serine/threonine protein kinase"/>
    <property type="match status" value="1"/>
</dbReference>
<dbReference type="FunFam" id="3.30.310.80:FF:000005">
    <property type="entry name" value="Non-specific serine/threonine protein kinase"/>
    <property type="match status" value="1"/>
</dbReference>
<dbReference type="Gene3D" id="3.30.310.80">
    <property type="entry name" value="Kinase associated domain 1, KA1"/>
    <property type="match status" value="1"/>
</dbReference>
<dbReference type="Gene3D" id="3.30.200.20">
    <property type="entry name" value="Phosphorylase Kinase, domain 1"/>
    <property type="match status" value="1"/>
</dbReference>
<dbReference type="Gene3D" id="1.10.510.10">
    <property type="entry name" value="Transferase(Phosphotransferase) domain 1"/>
    <property type="match status" value="1"/>
</dbReference>
<dbReference type="InterPro" id="IPR011009">
    <property type="entry name" value="Kinase-like_dom_sf"/>
</dbReference>
<dbReference type="InterPro" id="IPR018451">
    <property type="entry name" value="NAF/FISL_domain"/>
</dbReference>
<dbReference type="InterPro" id="IPR004041">
    <property type="entry name" value="NAF_dom"/>
</dbReference>
<dbReference type="InterPro" id="IPR000719">
    <property type="entry name" value="Prot_kinase_dom"/>
</dbReference>
<dbReference type="InterPro" id="IPR017441">
    <property type="entry name" value="Protein_kinase_ATP_BS"/>
</dbReference>
<dbReference type="InterPro" id="IPR008271">
    <property type="entry name" value="Ser/Thr_kinase_AS"/>
</dbReference>
<dbReference type="PANTHER" id="PTHR43895">
    <property type="entry name" value="CALCIUM/CALMODULIN-DEPENDENT PROTEIN KINASE KINASE-RELATED"/>
    <property type="match status" value="1"/>
</dbReference>
<dbReference type="PANTHER" id="PTHR43895:SF136">
    <property type="entry name" value="NON-SPECIFIC SERINE_THREONINE PROTEIN KINASE"/>
    <property type="match status" value="1"/>
</dbReference>
<dbReference type="Pfam" id="PF03822">
    <property type="entry name" value="NAF"/>
    <property type="match status" value="1"/>
</dbReference>
<dbReference type="Pfam" id="PF00069">
    <property type="entry name" value="Pkinase"/>
    <property type="match status" value="1"/>
</dbReference>
<dbReference type="SMART" id="SM00220">
    <property type="entry name" value="S_TKc"/>
    <property type="match status" value="1"/>
</dbReference>
<dbReference type="SUPFAM" id="SSF56112">
    <property type="entry name" value="Protein kinase-like (PK-like)"/>
    <property type="match status" value="1"/>
</dbReference>
<dbReference type="PROSITE" id="PS50816">
    <property type="entry name" value="NAF"/>
    <property type="match status" value="1"/>
</dbReference>
<dbReference type="PROSITE" id="PS00107">
    <property type="entry name" value="PROTEIN_KINASE_ATP"/>
    <property type="match status" value="1"/>
</dbReference>
<dbReference type="PROSITE" id="PS50011">
    <property type="entry name" value="PROTEIN_KINASE_DOM"/>
    <property type="match status" value="1"/>
</dbReference>
<dbReference type="PROSITE" id="PS00108">
    <property type="entry name" value="PROTEIN_KINASE_ST"/>
    <property type="match status" value="1"/>
</dbReference>
<sequence length="454" mass="50915">MVKGGREALLGGYEMGRTLGEGNFGKVKYARHLATGGHFAVKILDRGRVVSLRAGDQIRREIATLKLLRHPHVVRLHEVAASKTKIYMVLEFVNGGELFERIAVKGKLSEKEGRRLFQQLIDGVSYCHDRGVYHRDLKPENVLVDQKGNIKISDFGLSALPQHLGNDGLLHTTCGSPNYIAPEVLQNKGYDGSLSDIWSCGVILYVMLIGYLPFDDRNIVVLYQKIFKGDTQIPKWLSHSAQNLLRRILEPNPMKRIDMAGIKSHEWFQKDYIPVLPYDDDDEDVQFGARLPAKEQINDEPGDKNSHQINAFQLIGMASSLDLSGFFEDEEVSQRRIRFTSTHPPKDAFDKIESSATELGFQVQRGHSKLKLMRNCKGSKNPESFMVSAEVFELGPSVNVVELRKSNGDPALYRQLCERISSDMGARNTEQIFATASLEDDLQNSNAGTPLFAL</sequence>
<evidence type="ECO:0000250" key="1"/>
<evidence type="ECO:0000255" key="2">
    <source>
        <dbReference type="PROSITE-ProRule" id="PRU00159"/>
    </source>
</evidence>
<evidence type="ECO:0000255" key="3">
    <source>
        <dbReference type="PROSITE-ProRule" id="PRU00256"/>
    </source>
</evidence>
<evidence type="ECO:0000255" key="4">
    <source>
        <dbReference type="PROSITE-ProRule" id="PRU10027"/>
    </source>
</evidence>
<evidence type="ECO:0000269" key="5">
    <source>
    </source>
</evidence>
<evidence type="ECO:0000305" key="6"/>
<keyword id="KW-0067">ATP-binding</keyword>
<keyword id="KW-0418">Kinase</keyword>
<keyword id="KW-0464">Manganese</keyword>
<keyword id="KW-0547">Nucleotide-binding</keyword>
<keyword id="KW-1185">Reference proteome</keyword>
<keyword id="KW-0723">Serine/threonine-protein kinase</keyword>
<keyword id="KW-0808">Transferase</keyword>
<gene>
    <name type="primary">CIPK17</name>
    <name type="ordered locus">Os05g0136200</name>
    <name type="ordered locus">LOC_Os05g04550</name>
    <name type="ORF">OJ1127_B08.4</name>
    <name type="ORF">P0519E07.18</name>
</gene>
<comment type="function">
    <text evidence="1">CIPK serine-threonine protein kinases interact with CBL proteins. Binding of a CBL protein to the regulatory NAF domain of CIPK protein lead to the activation of the kinase in a calcium-dependent manner (By similarity).</text>
</comment>
<comment type="catalytic activity">
    <reaction>
        <text>L-seryl-[protein] + ATP = O-phospho-L-seryl-[protein] + ADP + H(+)</text>
        <dbReference type="Rhea" id="RHEA:17989"/>
        <dbReference type="Rhea" id="RHEA-COMP:9863"/>
        <dbReference type="Rhea" id="RHEA-COMP:11604"/>
        <dbReference type="ChEBI" id="CHEBI:15378"/>
        <dbReference type="ChEBI" id="CHEBI:29999"/>
        <dbReference type="ChEBI" id="CHEBI:30616"/>
        <dbReference type="ChEBI" id="CHEBI:83421"/>
        <dbReference type="ChEBI" id="CHEBI:456216"/>
        <dbReference type="EC" id="2.7.11.1"/>
    </reaction>
</comment>
<comment type="catalytic activity">
    <reaction>
        <text>L-threonyl-[protein] + ATP = O-phospho-L-threonyl-[protein] + ADP + H(+)</text>
        <dbReference type="Rhea" id="RHEA:46608"/>
        <dbReference type="Rhea" id="RHEA-COMP:11060"/>
        <dbReference type="Rhea" id="RHEA-COMP:11605"/>
        <dbReference type="ChEBI" id="CHEBI:15378"/>
        <dbReference type="ChEBI" id="CHEBI:30013"/>
        <dbReference type="ChEBI" id="CHEBI:30616"/>
        <dbReference type="ChEBI" id="CHEBI:61977"/>
        <dbReference type="ChEBI" id="CHEBI:456216"/>
        <dbReference type="EC" id="2.7.11.1"/>
    </reaction>
</comment>
<comment type="cofactor">
    <cofactor evidence="1">
        <name>Mn(2+)</name>
        <dbReference type="ChEBI" id="CHEBI:29035"/>
    </cofactor>
</comment>
<comment type="induction">
    <text evidence="5">By drought and salt stresses and abscisic acid (ABA).</text>
</comment>
<comment type="domain">
    <text evidence="1">The activation loop within the kinase domain is the target of phosphorylation/activation by upstream protein kinases. The PPI motif mediates the interaction with the ABI (abscisic acid-insensitive) phosphatases (By similarity).</text>
</comment>
<comment type="similarity">
    <text evidence="6">Belongs to the protein kinase superfamily. CAMK Ser/Thr protein kinase family. SNF1 subfamily.</text>
</comment>
<protein>
    <recommendedName>
        <fullName>CBL-interacting protein kinase 17</fullName>
        <ecNumber>2.7.11.1</ecNumber>
    </recommendedName>
    <alternativeName>
        <fullName>OsCIPK17</fullName>
    </alternativeName>
</protein>
<accession>Q75L42</accession>